<reference key="1">
    <citation type="journal article" date="2008" name="Genomics">
        <title>Evolution in the laboratory: the genome of Halobacterium salinarum strain R1 compared to that of strain NRC-1.</title>
        <authorList>
            <person name="Pfeiffer F."/>
            <person name="Schuster S.C."/>
            <person name="Broicher A."/>
            <person name="Falb M."/>
            <person name="Palm P."/>
            <person name="Rodewald K."/>
            <person name="Ruepp A."/>
            <person name="Soppa J."/>
            <person name="Tittor J."/>
            <person name="Oesterhelt D."/>
        </authorList>
    </citation>
    <scope>NUCLEOTIDE SEQUENCE [LARGE SCALE GENOMIC DNA]</scope>
    <source>
        <strain>ATCC 29341 / DSM 671 / R1</strain>
    </source>
</reference>
<name>RL15_HALS3</name>
<protein>
    <recommendedName>
        <fullName evidence="1">Large ribosomal subunit protein uL15</fullName>
    </recommendedName>
    <alternativeName>
        <fullName evidence="3">50S ribosomal protein L15</fullName>
    </alternativeName>
</protein>
<dbReference type="EMBL" id="AM774415">
    <property type="protein sequence ID" value="CAP14247.1"/>
    <property type="molecule type" value="Genomic_DNA"/>
</dbReference>
<dbReference type="RefSeq" id="WP_010903256.1">
    <property type="nucleotide sequence ID" value="NC_010364.1"/>
</dbReference>
<dbReference type="SMR" id="B0R678"/>
<dbReference type="EnsemblBacteria" id="CAP14247">
    <property type="protein sequence ID" value="CAP14247"/>
    <property type="gene ID" value="OE_3417F"/>
</dbReference>
<dbReference type="KEGG" id="hsl:OE_3417F"/>
<dbReference type="HOGENOM" id="CLU_109163_0_0_2"/>
<dbReference type="PhylomeDB" id="B0R678"/>
<dbReference type="Proteomes" id="UP000001321">
    <property type="component" value="Chromosome"/>
</dbReference>
<dbReference type="GO" id="GO:0022625">
    <property type="term" value="C:cytosolic large ribosomal subunit"/>
    <property type="evidence" value="ECO:0007669"/>
    <property type="project" value="TreeGrafter"/>
</dbReference>
<dbReference type="GO" id="GO:0019843">
    <property type="term" value="F:rRNA binding"/>
    <property type="evidence" value="ECO:0007669"/>
    <property type="project" value="UniProtKB-UniRule"/>
</dbReference>
<dbReference type="GO" id="GO:0003735">
    <property type="term" value="F:structural constituent of ribosome"/>
    <property type="evidence" value="ECO:0007669"/>
    <property type="project" value="InterPro"/>
</dbReference>
<dbReference type="GO" id="GO:0006412">
    <property type="term" value="P:translation"/>
    <property type="evidence" value="ECO:0007669"/>
    <property type="project" value="UniProtKB-UniRule"/>
</dbReference>
<dbReference type="Gene3D" id="3.100.10.10">
    <property type="match status" value="1"/>
</dbReference>
<dbReference type="Gene3D" id="4.10.990.10">
    <property type="match status" value="1"/>
</dbReference>
<dbReference type="HAMAP" id="MF_01341">
    <property type="entry name" value="Ribosomal_uL15"/>
    <property type="match status" value="1"/>
</dbReference>
<dbReference type="InterPro" id="IPR027386">
    <property type="entry name" value="Rbsml_uL15_N"/>
</dbReference>
<dbReference type="InterPro" id="IPR030878">
    <property type="entry name" value="Ribosomal_uL15"/>
</dbReference>
<dbReference type="InterPro" id="IPR021131">
    <property type="entry name" value="Ribosomal_uL15/eL18"/>
</dbReference>
<dbReference type="InterPro" id="IPR036227">
    <property type="entry name" value="Ribosomal_uL15/eL18_sf"/>
</dbReference>
<dbReference type="InterPro" id="IPR001196">
    <property type="entry name" value="Ribosomal_uL15_CS"/>
</dbReference>
<dbReference type="PANTHER" id="PTHR11721">
    <property type="entry name" value="60S RIBOSOMAL PROTEIN L27A"/>
    <property type="match status" value="1"/>
</dbReference>
<dbReference type="PANTHER" id="PTHR11721:SF3">
    <property type="entry name" value="LARGE RIBOSOMAL SUBUNIT PROTEIN UL15"/>
    <property type="match status" value="1"/>
</dbReference>
<dbReference type="Pfam" id="PF00828">
    <property type="entry name" value="Ribosomal_L27A"/>
    <property type="match status" value="1"/>
</dbReference>
<dbReference type="SUPFAM" id="SSF52080">
    <property type="entry name" value="Ribosomal proteins L15p and L18e"/>
    <property type="match status" value="1"/>
</dbReference>
<dbReference type="PROSITE" id="PS00475">
    <property type="entry name" value="RIBOSOMAL_L15"/>
    <property type="match status" value="1"/>
</dbReference>
<evidence type="ECO:0000255" key="1">
    <source>
        <dbReference type="HAMAP-Rule" id="MF_01341"/>
    </source>
</evidence>
<evidence type="ECO:0000256" key="2">
    <source>
        <dbReference type="SAM" id="MobiDB-lite"/>
    </source>
</evidence>
<evidence type="ECO:0000305" key="3"/>
<feature type="chain" id="PRO_1000142826" description="Large ribosomal subunit protein uL15">
    <location>
        <begin position="1"/>
        <end position="153"/>
    </location>
</feature>
<feature type="region of interest" description="Disordered" evidence="2">
    <location>
        <begin position="1"/>
        <end position="60"/>
    </location>
</feature>
<feature type="compositionally biased region" description="Basic residues" evidence="2">
    <location>
        <begin position="1"/>
        <end position="40"/>
    </location>
</feature>
<feature type="compositionally biased region" description="Basic and acidic residues" evidence="2">
    <location>
        <begin position="41"/>
        <end position="60"/>
    </location>
</feature>
<organism>
    <name type="scientific">Halobacterium salinarum (strain ATCC 29341 / DSM 671 / R1)</name>
    <dbReference type="NCBI Taxonomy" id="478009"/>
    <lineage>
        <taxon>Archaea</taxon>
        <taxon>Methanobacteriati</taxon>
        <taxon>Methanobacteriota</taxon>
        <taxon>Stenosarchaea group</taxon>
        <taxon>Halobacteria</taxon>
        <taxon>Halobacteriales</taxon>
        <taxon>Halobacteriaceae</taxon>
        <taxon>Halobacterium</taxon>
        <taxon>Halobacterium salinarum NRC-34001</taxon>
    </lineage>
</organism>
<comment type="function">
    <text evidence="1">Binds to the 23S rRNA.</text>
</comment>
<comment type="subunit">
    <text evidence="1">Part of the 50S ribosomal subunit.</text>
</comment>
<comment type="similarity">
    <text evidence="1">Belongs to the universal ribosomal protein uL15 family.</text>
</comment>
<keyword id="KW-0687">Ribonucleoprotein</keyword>
<keyword id="KW-0689">Ribosomal protein</keyword>
<keyword id="KW-0694">RNA-binding</keyword>
<keyword id="KW-0699">rRNA-binding</keyword>
<sequence>MTDKKRRQRGSRTHGGGTHKNRRGAGNRGGRGRAGRKKHEQHNYEDVGKSGFKRPEKTDRDVAVLSVQELDEDIPVLSESGVAEETEFGYRVDARDVVDDGWDADVVKVLGGGQLYEQLEVTADAFSDAAVELIEGEGGDAVVSERASEDDEE</sequence>
<gene>
    <name evidence="1" type="primary">rpl15</name>
    <name type="ordered locus">OE_3417F</name>
</gene>
<accession>B0R678</accession>
<proteinExistence type="inferred from homology"/>